<feature type="signal peptide" evidence="1">
    <location>
        <begin position="1"/>
        <end position="32"/>
    </location>
</feature>
<feature type="chain" id="PRO_0000456471" description="Transmembrane protein 276" evidence="1">
    <location>
        <begin position="33"/>
        <end position="192"/>
    </location>
</feature>
<feature type="transmembrane region" description="Helical" evidence="1">
    <location>
        <begin position="35"/>
        <end position="55"/>
    </location>
</feature>
<feature type="transmembrane region" description="Helical" evidence="1">
    <location>
        <begin position="63"/>
        <end position="83"/>
    </location>
</feature>
<feature type="transmembrane region" description="Helical" evidence="1">
    <location>
        <begin position="89"/>
        <end position="109"/>
    </location>
</feature>
<feature type="transmembrane region" description="Helical" evidence="1">
    <location>
        <begin position="114"/>
        <end position="134"/>
    </location>
</feature>
<name>TM276_HUMAN</name>
<organism>
    <name type="scientific">Homo sapiens</name>
    <name type="common">Human</name>
    <dbReference type="NCBI Taxonomy" id="9606"/>
    <lineage>
        <taxon>Eukaryota</taxon>
        <taxon>Metazoa</taxon>
        <taxon>Chordata</taxon>
        <taxon>Craniata</taxon>
        <taxon>Vertebrata</taxon>
        <taxon>Euteleostomi</taxon>
        <taxon>Mammalia</taxon>
        <taxon>Eutheria</taxon>
        <taxon>Euarchontoglires</taxon>
        <taxon>Primates</taxon>
        <taxon>Haplorrhini</taxon>
        <taxon>Catarrhini</taxon>
        <taxon>Hominidae</taxon>
        <taxon>Homo</taxon>
    </lineage>
</organism>
<reference key="1">
    <citation type="journal article" date="2006" name="Nature">
        <title>DNA sequence and analysis of human chromosome 8.</title>
        <authorList>
            <person name="Nusbaum C."/>
            <person name="Mikkelsen T.S."/>
            <person name="Zody M.C."/>
            <person name="Asakawa S."/>
            <person name="Taudien S."/>
            <person name="Garber M."/>
            <person name="Kodira C.D."/>
            <person name="Schueler M.G."/>
            <person name="Shimizu A."/>
            <person name="Whittaker C.A."/>
            <person name="Chang J.L."/>
            <person name="Cuomo C.A."/>
            <person name="Dewar K."/>
            <person name="FitzGerald M.G."/>
            <person name="Yang X."/>
            <person name="Allen N.R."/>
            <person name="Anderson S."/>
            <person name="Asakawa T."/>
            <person name="Blechschmidt K."/>
            <person name="Bloom T."/>
            <person name="Borowsky M.L."/>
            <person name="Butler J."/>
            <person name="Cook A."/>
            <person name="Corum B."/>
            <person name="DeArellano K."/>
            <person name="DeCaprio D."/>
            <person name="Dooley K.T."/>
            <person name="Dorris L. III"/>
            <person name="Engels R."/>
            <person name="Gloeckner G."/>
            <person name="Hafez N."/>
            <person name="Hagopian D.S."/>
            <person name="Hall J.L."/>
            <person name="Ishikawa S.K."/>
            <person name="Jaffe D.B."/>
            <person name="Kamat A."/>
            <person name="Kudoh J."/>
            <person name="Lehmann R."/>
            <person name="Lokitsang T."/>
            <person name="Macdonald P."/>
            <person name="Major J.E."/>
            <person name="Matthews C.D."/>
            <person name="Mauceli E."/>
            <person name="Menzel U."/>
            <person name="Mihalev A.H."/>
            <person name="Minoshima S."/>
            <person name="Murayama Y."/>
            <person name="Naylor J.W."/>
            <person name="Nicol R."/>
            <person name="Nguyen C."/>
            <person name="O'Leary S.B."/>
            <person name="O'Neill K."/>
            <person name="Parker S.C.J."/>
            <person name="Polley A."/>
            <person name="Raymond C.K."/>
            <person name="Reichwald K."/>
            <person name="Rodriguez J."/>
            <person name="Sasaki T."/>
            <person name="Schilhabel M."/>
            <person name="Siddiqui R."/>
            <person name="Smith C.L."/>
            <person name="Sneddon T.P."/>
            <person name="Talamas J.A."/>
            <person name="Tenzin P."/>
            <person name="Topham K."/>
            <person name="Venkataraman V."/>
            <person name="Wen G."/>
            <person name="Yamazaki S."/>
            <person name="Young S.K."/>
            <person name="Zeng Q."/>
            <person name="Zimmer A.R."/>
            <person name="Rosenthal A."/>
            <person name="Birren B.W."/>
            <person name="Platzer M."/>
            <person name="Shimizu N."/>
            <person name="Lander E.S."/>
        </authorList>
    </citation>
    <scope>NUCLEOTIDE SEQUENCE [LARGE SCALE GENOMIC DNA]</scope>
</reference>
<reference key="2">
    <citation type="submission" date="2005-09" db="EMBL/GenBank/DDBJ databases">
        <authorList>
            <person name="Mural R.J."/>
            <person name="Istrail S."/>
            <person name="Sutton G.G."/>
            <person name="Florea L."/>
            <person name="Halpern A.L."/>
            <person name="Mobarry C.M."/>
            <person name="Lippert R."/>
            <person name="Walenz B."/>
            <person name="Shatkay H."/>
            <person name="Dew I."/>
            <person name="Miller J.R."/>
            <person name="Flanigan M.J."/>
            <person name="Edwards N.J."/>
            <person name="Bolanos R."/>
            <person name="Fasulo D."/>
            <person name="Halldorsson B.V."/>
            <person name="Hannenhalli S."/>
            <person name="Turner R."/>
            <person name="Yooseph S."/>
            <person name="Lu F."/>
            <person name="Nusskern D.R."/>
            <person name="Shue B.C."/>
            <person name="Zheng X.H."/>
            <person name="Zhong F."/>
            <person name="Delcher A.L."/>
            <person name="Huson D.H."/>
            <person name="Kravitz S.A."/>
            <person name="Mouchard L."/>
            <person name="Reinert K."/>
            <person name="Remington K.A."/>
            <person name="Clark A.G."/>
            <person name="Waterman M.S."/>
            <person name="Eichler E.E."/>
            <person name="Adams M.D."/>
            <person name="Hunkapiller M.W."/>
            <person name="Myers E.W."/>
            <person name="Venter J.C."/>
        </authorList>
    </citation>
    <scope>NUCLEOTIDE SEQUENCE [LARGE SCALE GENOMIC DNA]</scope>
</reference>
<reference key="3">
    <citation type="journal article" date="2004" name="Genome Res.">
        <title>The status, quality, and expansion of the NIH full-length cDNA project: the Mammalian Gene Collection (MGC).</title>
        <authorList>
            <consortium name="The MGC Project Team"/>
        </authorList>
    </citation>
    <scope>NUCLEOTIDE SEQUENCE [LARGE SCALE MRNA]</scope>
</reference>
<proteinExistence type="evidence at protein level"/>
<evidence type="ECO:0000255" key="1"/>
<evidence type="ECO:0000305" key="2"/>
<evidence type="ECO:0000312" key="3">
    <source>
        <dbReference type="HGNC" id="HGNC:56235"/>
    </source>
</evidence>
<protein>
    <recommendedName>
        <fullName evidence="2">Transmembrane protein 276</fullName>
    </recommendedName>
</protein>
<dbReference type="EMBL" id="AC084125">
    <property type="status" value="NOT_ANNOTATED_CDS"/>
    <property type="molecule type" value="Genomic_DNA"/>
</dbReference>
<dbReference type="EMBL" id="CH471162">
    <property type="protein sequence ID" value="EAW82091.1"/>
    <property type="molecule type" value="Genomic_DNA"/>
</dbReference>
<dbReference type="EMBL" id="BC005073">
    <property type="protein sequence ID" value="AAH05073.1"/>
    <property type="molecule type" value="mRNA"/>
</dbReference>
<dbReference type="EMBL" id="BC065484">
    <property type="protein sequence ID" value="AAH65484.1"/>
    <property type="molecule type" value="mRNA"/>
</dbReference>
<dbReference type="CCDS" id="CCDS6426.1"/>
<dbReference type="RefSeq" id="NP_001123360.1">
    <property type="nucleotide sequence ID" value="NM_001129888.2"/>
</dbReference>
<dbReference type="RefSeq" id="NP_001394987.1">
    <property type="nucleotide sequence ID" value="NM_001408058.1"/>
</dbReference>
<dbReference type="RefSeq" id="NP_001394988.1">
    <property type="nucleotide sequence ID" value="NM_001408059.1"/>
</dbReference>
<dbReference type="RefSeq" id="NP_001394989.1">
    <property type="nucleotide sequence ID" value="NM_001408060.1"/>
</dbReference>
<dbReference type="RefSeq" id="NP_001394990.1">
    <property type="nucleotide sequence ID" value="NM_001408061.1"/>
</dbReference>
<dbReference type="RefSeq" id="NP_001394991.1">
    <property type="nucleotide sequence ID" value="NM_001408062.1"/>
</dbReference>
<dbReference type="RefSeq" id="NP_116076.1">
    <property type="nucleotide sequence ID" value="NM_032687.4"/>
</dbReference>
<dbReference type="RefSeq" id="XP_006716623.1">
    <property type="nucleotide sequence ID" value="XM_006716560.3"/>
</dbReference>
<dbReference type="RefSeq" id="XP_006716624.1">
    <property type="nucleotide sequence ID" value="XM_006716561.3"/>
</dbReference>
<dbReference type="IntAct" id="P0DTL5">
    <property type="interactions" value="7"/>
</dbReference>
<dbReference type="iPTMnet" id="P0DTL5"/>
<dbReference type="PhosphoSitePlus" id="P0DTL5"/>
<dbReference type="PeptideAtlas" id="P0DTL5"/>
<dbReference type="Ensembl" id="ENST00000306145.10">
    <property type="protein sequence ID" value="ENSP00000304826.5"/>
    <property type="gene ID" value="ENSG00000291317.1"/>
</dbReference>
<dbReference type="Ensembl" id="ENST00000403000.6">
    <property type="protein sequence ID" value="ENSP00000385962.2"/>
    <property type="gene ID" value="ENSG00000291317.1"/>
</dbReference>
<dbReference type="Ensembl" id="ENST00000424149.6">
    <property type="protein sequence ID" value="ENSP00000414647.2"/>
    <property type="gene ID" value="ENSG00000291317.1"/>
</dbReference>
<dbReference type="GeneID" id="84773"/>
<dbReference type="KEGG" id="hsa:84773"/>
<dbReference type="MANE-Select" id="ENST00000306145.10">
    <property type="protein sequence ID" value="ENSP00000304826.5"/>
    <property type="RefSeq nucleotide sequence ID" value="NM_032687.4"/>
    <property type="RefSeq protein sequence ID" value="NP_116076.1"/>
</dbReference>
<dbReference type="AGR" id="HGNC:56235"/>
<dbReference type="CTD" id="84773"/>
<dbReference type="DisGeNET" id="84773"/>
<dbReference type="GeneCards" id="TMEM276"/>
<dbReference type="HGNC" id="HGNC:56235">
    <property type="gene designation" value="TMEM276"/>
</dbReference>
<dbReference type="GeneTree" id="ENSGT00510000049727"/>
<dbReference type="OrthoDB" id="10062218at2759"/>
<dbReference type="PRO" id="PR:P0DTL5"/>
<dbReference type="Proteomes" id="UP000005640">
    <property type="component" value="Chromosome 8"/>
</dbReference>
<dbReference type="GO" id="GO:0016020">
    <property type="term" value="C:membrane"/>
    <property type="evidence" value="ECO:0007669"/>
    <property type="project" value="UniProtKB-SubCell"/>
</dbReference>
<sequence>MAPKPGAEWSTALSHLVLGVVSLHAAVSTAEASRGAAAGFLLQVLAATTTLAPGLSTHEDCLAGAWVATVIGLPLLAFDFHWVNGDRSSANLLLGGGMVLAVAGGHLGPEGRSVAGQAMLLVVAVTILIVAVFTANTYGMWGGAMLGVAGLLSRLEEDRLLLLPKEDVCRWALAVGSWAYCRALHTQRLQWE</sequence>
<keyword id="KW-0472">Membrane</keyword>
<keyword id="KW-1267">Proteomics identification</keyword>
<keyword id="KW-1185">Reference proteome</keyword>
<keyword id="KW-0732">Signal</keyword>
<keyword id="KW-0812">Transmembrane</keyword>
<keyword id="KW-1133">Transmembrane helix</keyword>
<accession>P0DTL5</accession>
<accession>B3KSX0</accession>
<accession>D3DWM3</accession>
<accession>Q6ZMK1</accession>
<accession>Q9BSF6</accession>
<accession>Q9BSU6</accession>
<gene>
    <name evidence="3" type="primary">TMEM276</name>
</gene>
<comment type="interaction">
    <interactant intactId="EBI-11997340">
        <id>P0DTL5</id>
    </interactant>
    <interactant intactId="EBI-740785">
        <id>P49639</id>
        <label>HOXA1</label>
    </interactant>
    <organismsDiffer>false</organismsDiffer>
    <experiments>3</experiments>
</comment>
<comment type="interaction">
    <interactant intactId="EBI-11997340">
        <id>P0DTL5</id>
    </interactant>
    <interactant intactId="EBI-358297">
        <id>O00505</id>
        <label>KPNA3</label>
    </interactant>
    <organismsDiffer>false</organismsDiffer>
    <experiments>3</experiments>
</comment>
<comment type="interaction">
    <interactant intactId="EBI-11997340">
        <id>P0DTL5</id>
    </interactant>
    <interactant intactId="EBI-11959885">
        <id>Q07627</id>
        <label>KRTAP1-1</label>
    </interactant>
    <organismsDiffer>false</organismsDiffer>
    <experiments>3</experiments>
</comment>
<comment type="interaction">
    <interactant intactId="EBI-11997340">
        <id>P0DTL5</id>
    </interactant>
    <interactant intactId="EBI-11749135">
        <id>Q8IUG1</id>
        <label>KRTAP1-3</label>
    </interactant>
    <organismsDiffer>false</organismsDiffer>
    <experiments>3</experiments>
</comment>
<comment type="interaction">
    <interactant intactId="EBI-11997340">
        <id>P0DTL5</id>
    </interactant>
    <interactant intactId="EBI-22310682">
        <id>P0DPK4</id>
        <label>NOTCH2NLC</label>
    </interactant>
    <organismsDiffer>false</organismsDiffer>
    <experiments>3</experiments>
</comment>
<comment type="interaction">
    <interactant intactId="EBI-11997340">
        <id>P0DTL5</id>
    </interactant>
    <interactant intactId="EBI-3919694">
        <id>P15151</id>
        <label>PVR</label>
    </interactant>
    <organismsDiffer>false</organismsDiffer>
    <experiments>3</experiments>
</comment>
<comment type="interaction">
    <interactant intactId="EBI-11997340">
        <id>P0DTL5</id>
    </interactant>
    <interactant intactId="EBI-727004">
        <id>O00560</id>
        <label>SDCBP</label>
    </interactant>
    <organismsDiffer>false</organismsDiffer>
    <experiments>3</experiments>
</comment>
<comment type="subcellular location">
    <subcellularLocation>
        <location evidence="1">Membrane</location>
        <topology evidence="1">Multi-pass membrane protein</topology>
    </subcellularLocation>
</comment>